<protein>
    <recommendedName>
        <fullName>UPF0357 protein AAL017W</fullName>
    </recommendedName>
</protein>
<reference key="1">
    <citation type="submission" date="2000-12" db="EMBL/GenBank/DDBJ databases">
        <title>Sequence of chromosome III intergenic region between BUD3 and GBP2 including previously unidentified gene, which is the ortholog of YCL012C in Saccharomyces cerevisiae.</title>
        <authorList>
            <person name="Dietrich F.S."/>
            <person name="Voegeli S."/>
            <person name="Rebischung C."/>
            <person name="Mohr C."/>
            <person name="Gaffney T.D."/>
            <person name="Philippsen P."/>
        </authorList>
    </citation>
    <scope>NUCLEOTIDE SEQUENCE [GENOMIC DNA]</scope>
</reference>
<reference key="2">
    <citation type="journal article" date="2004" name="Science">
        <title>The Ashbya gossypii genome as a tool for mapping the ancient Saccharomyces cerevisiae genome.</title>
        <authorList>
            <person name="Dietrich F.S."/>
            <person name="Voegeli S."/>
            <person name="Brachat S."/>
            <person name="Lerch A."/>
            <person name="Gates K."/>
            <person name="Steiner S."/>
            <person name="Mohr C."/>
            <person name="Poehlmann R."/>
            <person name="Luedi P."/>
            <person name="Choi S."/>
            <person name="Wing R.A."/>
            <person name="Flavier A."/>
            <person name="Gaffney T.D."/>
            <person name="Philippsen P."/>
        </authorList>
    </citation>
    <scope>NUCLEOTIDE SEQUENCE [LARGE SCALE GENOMIC DNA]</scope>
    <source>
        <strain>ATCC 10895 / CBS 109.51 / FGSC 9923 / NRRL Y-1056</strain>
    </source>
</reference>
<reference key="3">
    <citation type="journal article" date="2013" name="G3 (Bethesda)">
        <title>Genomes of Ashbya fungi isolated from insects reveal four mating-type loci, numerous translocations, lack of transposons, and distinct gene duplications.</title>
        <authorList>
            <person name="Dietrich F.S."/>
            <person name="Voegeli S."/>
            <person name="Kuo S."/>
            <person name="Philippsen P."/>
        </authorList>
    </citation>
    <scope>GENOME REANNOTATION</scope>
    <source>
        <strain>ATCC 10895 / CBS 109.51 / FGSC 9923 / NRRL Y-1056</strain>
    </source>
</reference>
<keyword id="KW-1185">Reference proteome</keyword>
<keyword id="KW-0732">Signal</keyword>
<dbReference type="EMBL" id="AF210625">
    <property type="protein sequence ID" value="AAO21871.1"/>
    <property type="molecule type" value="Genomic_DNA"/>
</dbReference>
<dbReference type="EMBL" id="AE016814">
    <property type="protein sequence ID" value="AAS50349.1"/>
    <property type="status" value="ALT_SEQ"/>
    <property type="molecule type" value="Genomic_DNA"/>
</dbReference>
<dbReference type="RefSeq" id="NP_982525.1">
    <property type="nucleotide sequence ID" value="NM_207878.1"/>
</dbReference>
<dbReference type="SMR" id="Q876Z1"/>
<dbReference type="FunCoup" id="Q876Z1">
    <property type="interactions" value="6"/>
</dbReference>
<dbReference type="GeneID" id="4618473"/>
<dbReference type="KEGG" id="ago:AGOS_AAL017W"/>
<dbReference type="InParanoid" id="Q876Z1"/>
<dbReference type="OrthoDB" id="447314at2759"/>
<dbReference type="Proteomes" id="UP000000591">
    <property type="component" value="Chromosome I"/>
</dbReference>
<dbReference type="InterPro" id="IPR018559">
    <property type="entry name" value="DUF2015"/>
</dbReference>
<dbReference type="PANTHER" id="PTHR28023">
    <property type="entry name" value="UPF0357 PROTEIN YCL012C"/>
    <property type="match status" value="1"/>
</dbReference>
<dbReference type="PANTHER" id="PTHR28023:SF1">
    <property type="entry name" value="UPF0357 PROTEIN YCL012C"/>
    <property type="match status" value="1"/>
</dbReference>
<dbReference type="Pfam" id="PF09435">
    <property type="entry name" value="DUF2015"/>
    <property type="match status" value="1"/>
</dbReference>
<feature type="signal peptide" evidence="1">
    <location>
        <begin position="1"/>
        <end position="23"/>
    </location>
</feature>
<feature type="chain" id="PRO_0000045282" description="UPF0357 protein AAL017W">
    <location>
        <begin position="24"/>
        <end position="134"/>
    </location>
</feature>
<sequence length="134" mass="15388">MFGLISLWHLFWLAVMAGILVVAHRNRETIRYKTSEFMVRLRSRFGGYTSINDHFVRDLEDGFSSQNFDLTSANSNDTRSGLDEASKQEIRRIMEEQGLGFDQARLVYTTRKFGAHGIAPDGMPLDPKVVTFRR</sequence>
<evidence type="ECO:0000255" key="1"/>
<evidence type="ECO:0000305" key="2"/>
<comment type="similarity">
    <text evidence="2">Belongs to the UPF0357 family.</text>
</comment>
<comment type="sequence caution" evidence="2">
    <conflict type="erroneous gene model prediction">
        <sequence resource="EMBL-CDS" id="AAS50349"/>
    </conflict>
</comment>
<name>YCB2_EREGS</name>
<accession>Q876Z1</accession>
<accession>Q75EU6</accession>
<proteinExistence type="inferred from homology"/>
<gene>
    <name type="ordered locus">AAL017W</name>
</gene>
<organism>
    <name type="scientific">Eremothecium gossypii (strain ATCC 10895 / CBS 109.51 / FGSC 9923 / NRRL Y-1056)</name>
    <name type="common">Yeast</name>
    <name type="synonym">Ashbya gossypii</name>
    <dbReference type="NCBI Taxonomy" id="284811"/>
    <lineage>
        <taxon>Eukaryota</taxon>
        <taxon>Fungi</taxon>
        <taxon>Dikarya</taxon>
        <taxon>Ascomycota</taxon>
        <taxon>Saccharomycotina</taxon>
        <taxon>Saccharomycetes</taxon>
        <taxon>Saccharomycetales</taxon>
        <taxon>Saccharomycetaceae</taxon>
        <taxon>Eremothecium</taxon>
    </lineage>
</organism>